<feature type="chain" id="PRO_0000325114" description="Quinate/shikimate dehydrogenase (NAD(+))">
    <location>
        <begin position="1"/>
        <end position="284"/>
    </location>
</feature>
<feature type="active site" description="Proton acceptor" evidence="2">
    <location>
        <position position="73"/>
    </location>
</feature>
<feature type="binding site" evidence="1">
    <location>
        <begin position="18"/>
        <end position="20"/>
    </location>
    <ligand>
        <name>L-quinate</name>
        <dbReference type="ChEBI" id="CHEBI:29751"/>
    </ligand>
</feature>
<feature type="binding site" evidence="1">
    <location>
        <position position="18"/>
    </location>
    <ligand>
        <name>shikimate</name>
        <dbReference type="ChEBI" id="CHEBI:36208"/>
    </ligand>
</feature>
<feature type="binding site" evidence="1">
    <location>
        <position position="70"/>
    </location>
    <ligand>
        <name>L-quinate</name>
        <dbReference type="ChEBI" id="CHEBI:29751"/>
    </ligand>
</feature>
<feature type="binding site" evidence="1">
    <location>
        <position position="70"/>
    </location>
    <ligand>
        <name>shikimate</name>
        <dbReference type="ChEBI" id="CHEBI:36208"/>
    </ligand>
</feature>
<feature type="binding site" evidence="1">
    <location>
        <position position="74"/>
    </location>
    <ligand>
        <name>L-quinate</name>
        <dbReference type="ChEBI" id="CHEBI:29751"/>
    </ligand>
</feature>
<feature type="binding site" evidence="1">
    <location>
        <position position="74"/>
    </location>
    <ligand>
        <name>shikimate</name>
        <dbReference type="ChEBI" id="CHEBI:36208"/>
    </ligand>
</feature>
<feature type="binding site" evidence="1">
    <location>
        <position position="95"/>
    </location>
    <ligand>
        <name>L-quinate</name>
        <dbReference type="ChEBI" id="CHEBI:29751"/>
    </ligand>
</feature>
<feature type="binding site" evidence="1">
    <location>
        <position position="95"/>
    </location>
    <ligand>
        <name>shikimate</name>
        <dbReference type="ChEBI" id="CHEBI:36208"/>
    </ligand>
</feature>
<feature type="binding site" evidence="1">
    <location>
        <position position="111"/>
    </location>
    <ligand>
        <name>L-quinate</name>
        <dbReference type="ChEBI" id="CHEBI:29751"/>
    </ligand>
</feature>
<feature type="binding site" evidence="1">
    <location>
        <position position="111"/>
    </location>
    <ligand>
        <name>shikimate</name>
        <dbReference type="ChEBI" id="CHEBI:36208"/>
    </ligand>
</feature>
<feature type="binding site" evidence="2">
    <location>
        <begin position="137"/>
        <end position="138"/>
    </location>
    <ligand>
        <name>NAD(+)</name>
        <dbReference type="ChEBI" id="CHEBI:57540"/>
    </ligand>
</feature>
<feature type="binding site" evidence="1">
    <location>
        <position position="159"/>
    </location>
    <ligand>
        <name>NAD(+)</name>
        <dbReference type="ChEBI" id="CHEBI:57540"/>
    </ligand>
</feature>
<feature type="binding site" evidence="1">
    <location>
        <position position="164"/>
    </location>
    <ligand>
        <name>NAD(+)</name>
        <dbReference type="ChEBI" id="CHEBI:57540"/>
    </ligand>
</feature>
<feature type="binding site" evidence="1">
    <location>
        <begin position="203"/>
        <end position="206"/>
    </location>
    <ligand>
        <name>NAD(+)</name>
        <dbReference type="ChEBI" id="CHEBI:57540"/>
    </ligand>
</feature>
<feature type="binding site" evidence="1">
    <location>
        <position position="214"/>
    </location>
    <ligand>
        <name>NAD(+)</name>
        <dbReference type="ChEBI" id="CHEBI:57540"/>
    </ligand>
</feature>
<feature type="binding site" evidence="2">
    <location>
        <position position="229"/>
    </location>
    <ligand>
        <name>NAD(+)</name>
        <dbReference type="ChEBI" id="CHEBI:57540"/>
    </ligand>
</feature>
<feature type="binding site" evidence="2">
    <location>
        <position position="252"/>
    </location>
    <ligand>
        <name>NAD(+)</name>
        <dbReference type="ChEBI" id="CHEBI:57540"/>
    </ligand>
</feature>
<feature type="binding site" evidence="1">
    <location>
        <position position="259"/>
    </location>
    <ligand>
        <name>L-quinate</name>
        <dbReference type="ChEBI" id="CHEBI:29751"/>
    </ligand>
</feature>
<feature type="binding site" evidence="1">
    <location>
        <position position="259"/>
    </location>
    <ligand>
        <name>shikimate</name>
        <dbReference type="ChEBI" id="CHEBI:36208"/>
    </ligand>
</feature>
<evidence type="ECO:0000250" key="1">
    <source>
        <dbReference type="UniProtKB" id="Q9X5C9"/>
    </source>
</evidence>
<evidence type="ECO:0000255" key="2">
    <source>
        <dbReference type="HAMAP-Rule" id="MF_00222"/>
    </source>
</evidence>
<protein>
    <recommendedName>
        <fullName evidence="1">Quinate/shikimate dehydrogenase (NAD(+))</fullName>
        <shortName evidence="1">QSDH</shortName>
        <ecNumber evidence="1">1.1.1.-</ecNumber>
        <ecNumber evidence="1">1.1.1.24</ecNumber>
    </recommendedName>
</protein>
<proteinExistence type="inferred from homology"/>
<organism>
    <name type="scientific">Corynebacterium efficiens (strain DSM 44549 / YS-314 / AJ 12310 / JCM 11189 / NBRC 100395)</name>
    <dbReference type="NCBI Taxonomy" id="196164"/>
    <lineage>
        <taxon>Bacteria</taxon>
        <taxon>Bacillati</taxon>
        <taxon>Actinomycetota</taxon>
        <taxon>Actinomycetes</taxon>
        <taxon>Mycobacteriales</taxon>
        <taxon>Corynebacteriaceae</taxon>
        <taxon>Corynebacterium</taxon>
    </lineage>
</organism>
<comment type="function">
    <text evidence="1">Involved in the biosynthesis of the chorismate, which leads to the biosynthesis of aromatic amino acids, and plays a key role in the quinate degradation pathway. Catalyzes the NAD(+)-dependent oxidation of both quinate and shikimate to 3-dehydroquinate and 3-dehydroshikimate, respectively. It can only use NAD.</text>
</comment>
<comment type="catalytic activity">
    <reaction evidence="1">
        <text>L-quinate + NAD(+) = 3-dehydroquinate + NADH + H(+)</text>
        <dbReference type="Rhea" id="RHEA:22364"/>
        <dbReference type="ChEBI" id="CHEBI:15378"/>
        <dbReference type="ChEBI" id="CHEBI:29751"/>
        <dbReference type="ChEBI" id="CHEBI:32364"/>
        <dbReference type="ChEBI" id="CHEBI:57540"/>
        <dbReference type="ChEBI" id="CHEBI:57945"/>
        <dbReference type="EC" id="1.1.1.24"/>
    </reaction>
</comment>
<comment type="catalytic activity">
    <reaction evidence="1">
        <text>shikimate + NAD(+) = 3-dehydroshikimate + NADH + H(+)</text>
        <dbReference type="Rhea" id="RHEA:17741"/>
        <dbReference type="ChEBI" id="CHEBI:15378"/>
        <dbReference type="ChEBI" id="CHEBI:16630"/>
        <dbReference type="ChEBI" id="CHEBI:36208"/>
        <dbReference type="ChEBI" id="CHEBI:57540"/>
        <dbReference type="ChEBI" id="CHEBI:57945"/>
    </reaction>
</comment>
<comment type="pathway">
    <text evidence="1 2">Metabolic intermediate biosynthesis; chorismate biosynthesis; chorismate from D-erythrose 4-phosphate and phosphoenolpyruvate: step 4/7.</text>
</comment>
<comment type="pathway">
    <text evidence="1">Aromatic compound metabolism; 3,4-dihydroxybenzoate biosynthesis; 3-dehydroquinate from D-quinate (NAD(+) route).</text>
</comment>
<comment type="subunit">
    <text evidence="1 2">Homodimer.</text>
</comment>
<comment type="similarity">
    <text evidence="1 2">Belongs to the shikimate dehydrogenase family.</text>
</comment>
<sequence length="284" mass="29938">MNHDSILLGLIGEDISLSRTPAMHEAEGLAQGAATVYRRIDTLTDRARGRSLQELLDAARSTGFNGLNITHPYKQAVLPLLDEVSEQAAQLGAVNTVVIGEDGRTSGHNTDVTGFARGLEEGLPDATMTTVVQVGAGGVGNAVAYSLVTHGVEQLQVADLDPARAQALADAINSAIGREAVHGIDARGVEEAIAAADGVVNATPMGMLAHPGTAFDTSCLTPHHWVGDVVYMPIETQLLKDARALGCRTLDGTRMAIHQAVDAFRLFTGLEPDVERMRATFLSL</sequence>
<name>AROE_COREF</name>
<accession>Q8FSF0</accession>
<gene>
    <name evidence="2" type="primary">aroE</name>
    <name type="ordered locus">CE0443</name>
</gene>
<dbReference type="EC" id="1.1.1.-" evidence="1"/>
<dbReference type="EC" id="1.1.1.24" evidence="1"/>
<dbReference type="EMBL" id="BA000035">
    <property type="protein sequence ID" value="BAC17253.1"/>
    <property type="molecule type" value="Genomic_DNA"/>
</dbReference>
<dbReference type="RefSeq" id="WP_006770320.1">
    <property type="nucleotide sequence ID" value="NC_004369.1"/>
</dbReference>
<dbReference type="SMR" id="Q8FSF0"/>
<dbReference type="STRING" id="196164.gene:10740841"/>
<dbReference type="KEGG" id="cef:CE0443"/>
<dbReference type="eggNOG" id="COG0169">
    <property type="taxonomic scope" value="Bacteria"/>
</dbReference>
<dbReference type="HOGENOM" id="CLU_044063_4_3_11"/>
<dbReference type="OrthoDB" id="9776868at2"/>
<dbReference type="UniPathway" id="UPA00053">
    <property type="reaction ID" value="UER00087"/>
</dbReference>
<dbReference type="Proteomes" id="UP000001409">
    <property type="component" value="Chromosome"/>
</dbReference>
<dbReference type="GO" id="GO:0005829">
    <property type="term" value="C:cytosol"/>
    <property type="evidence" value="ECO:0007669"/>
    <property type="project" value="TreeGrafter"/>
</dbReference>
<dbReference type="GO" id="GO:0070403">
    <property type="term" value="F:NAD+ binding"/>
    <property type="evidence" value="ECO:0000250"/>
    <property type="project" value="UniProtKB"/>
</dbReference>
<dbReference type="GO" id="GO:0050661">
    <property type="term" value="F:NADP binding"/>
    <property type="evidence" value="ECO:0007669"/>
    <property type="project" value="TreeGrafter"/>
</dbReference>
<dbReference type="GO" id="GO:0030266">
    <property type="term" value="F:quinate 3-dehydrogenase (NAD+) activity"/>
    <property type="evidence" value="ECO:0000250"/>
    <property type="project" value="UniProtKB"/>
</dbReference>
<dbReference type="GO" id="GO:0052734">
    <property type="term" value="F:shikimate 3-dehydrogenase (NAD+) activity"/>
    <property type="evidence" value="ECO:0007669"/>
    <property type="project" value="RHEA"/>
</dbReference>
<dbReference type="GO" id="GO:0004764">
    <property type="term" value="F:shikimate 3-dehydrogenase (NADP+) activity"/>
    <property type="evidence" value="ECO:0007669"/>
    <property type="project" value="UniProtKB-UniRule"/>
</dbReference>
<dbReference type="GO" id="GO:0008652">
    <property type="term" value="P:amino acid biosynthetic process"/>
    <property type="evidence" value="ECO:0007669"/>
    <property type="project" value="UniProtKB-KW"/>
</dbReference>
<dbReference type="GO" id="GO:0009073">
    <property type="term" value="P:aromatic amino acid family biosynthetic process"/>
    <property type="evidence" value="ECO:0007669"/>
    <property type="project" value="UniProtKB-KW"/>
</dbReference>
<dbReference type="GO" id="GO:0009423">
    <property type="term" value="P:chorismate biosynthetic process"/>
    <property type="evidence" value="ECO:0000250"/>
    <property type="project" value="UniProtKB"/>
</dbReference>
<dbReference type="GO" id="GO:0019632">
    <property type="term" value="P:shikimate metabolic process"/>
    <property type="evidence" value="ECO:0000250"/>
    <property type="project" value="UniProtKB"/>
</dbReference>
<dbReference type="CDD" id="cd01065">
    <property type="entry name" value="NAD_bind_Shikimate_DH"/>
    <property type="match status" value="1"/>
</dbReference>
<dbReference type="FunFam" id="3.40.50.720:FF:000086">
    <property type="entry name" value="Quinate/shikimate dehydrogenase"/>
    <property type="match status" value="1"/>
</dbReference>
<dbReference type="Gene3D" id="3.40.50.10860">
    <property type="entry name" value="Leucine Dehydrogenase, chain A, domain 1"/>
    <property type="match status" value="1"/>
</dbReference>
<dbReference type="Gene3D" id="3.40.50.720">
    <property type="entry name" value="NAD(P)-binding Rossmann-like Domain"/>
    <property type="match status" value="1"/>
</dbReference>
<dbReference type="HAMAP" id="MF_00222">
    <property type="entry name" value="Shikimate_DH_AroE"/>
    <property type="match status" value="1"/>
</dbReference>
<dbReference type="InterPro" id="IPR046346">
    <property type="entry name" value="Aminoacid_DH-like_N_sf"/>
</dbReference>
<dbReference type="InterPro" id="IPR036291">
    <property type="entry name" value="NAD(P)-bd_dom_sf"/>
</dbReference>
<dbReference type="InterPro" id="IPR005097">
    <property type="entry name" value="Sacchrp_dh_NADP-bd"/>
</dbReference>
<dbReference type="InterPro" id="IPR041121">
    <property type="entry name" value="SDH_C"/>
</dbReference>
<dbReference type="InterPro" id="IPR013708">
    <property type="entry name" value="Shikimate_DH-bd_N"/>
</dbReference>
<dbReference type="InterPro" id="IPR022893">
    <property type="entry name" value="Shikimate_DH_fam"/>
</dbReference>
<dbReference type="NCBIfam" id="NF001319">
    <property type="entry name" value="PRK00258.3-3"/>
    <property type="match status" value="1"/>
</dbReference>
<dbReference type="NCBIfam" id="NF009201">
    <property type="entry name" value="PRK12549.1"/>
    <property type="match status" value="1"/>
</dbReference>
<dbReference type="NCBIfam" id="NF010631">
    <property type="entry name" value="PRK14027.1"/>
    <property type="match status" value="1"/>
</dbReference>
<dbReference type="PANTHER" id="PTHR21089:SF1">
    <property type="entry name" value="BIFUNCTIONAL 3-DEHYDROQUINATE DEHYDRATASE_SHIKIMATE DEHYDROGENASE, CHLOROPLASTIC"/>
    <property type="match status" value="1"/>
</dbReference>
<dbReference type="PANTHER" id="PTHR21089">
    <property type="entry name" value="SHIKIMATE DEHYDROGENASE"/>
    <property type="match status" value="1"/>
</dbReference>
<dbReference type="Pfam" id="PF03435">
    <property type="entry name" value="Sacchrp_dh_NADP"/>
    <property type="match status" value="1"/>
</dbReference>
<dbReference type="Pfam" id="PF18317">
    <property type="entry name" value="SDH_C"/>
    <property type="match status" value="1"/>
</dbReference>
<dbReference type="Pfam" id="PF08501">
    <property type="entry name" value="Shikimate_dh_N"/>
    <property type="match status" value="1"/>
</dbReference>
<dbReference type="SUPFAM" id="SSF53223">
    <property type="entry name" value="Aminoacid dehydrogenase-like, N-terminal domain"/>
    <property type="match status" value="1"/>
</dbReference>
<dbReference type="SUPFAM" id="SSF51735">
    <property type="entry name" value="NAD(P)-binding Rossmann-fold domains"/>
    <property type="match status" value="1"/>
</dbReference>
<reference key="1">
    <citation type="journal article" date="2003" name="Genome Res.">
        <title>Comparative complete genome sequence analysis of the amino acid replacements responsible for the thermostability of Corynebacterium efficiens.</title>
        <authorList>
            <person name="Nishio Y."/>
            <person name="Nakamura Y."/>
            <person name="Kawarabayasi Y."/>
            <person name="Usuda Y."/>
            <person name="Kimura E."/>
            <person name="Sugimoto S."/>
            <person name="Matsui K."/>
            <person name="Yamagishi A."/>
            <person name="Kikuchi H."/>
            <person name="Ikeo K."/>
            <person name="Gojobori T."/>
        </authorList>
    </citation>
    <scope>NUCLEOTIDE SEQUENCE [LARGE SCALE GENOMIC DNA]</scope>
    <source>
        <strain>DSM 44549 / YS-314 / AJ 12310 / JCM 11189 / NBRC 100395</strain>
    </source>
</reference>
<keyword id="KW-0028">Amino-acid biosynthesis</keyword>
<keyword id="KW-0057">Aromatic amino acid biosynthesis</keyword>
<keyword id="KW-0520">NAD</keyword>
<keyword id="KW-0560">Oxidoreductase</keyword>
<keyword id="KW-1185">Reference proteome</keyword>